<protein>
    <recommendedName>
        <fullName evidence="1">UPF0597 protein Spea_0809</fullName>
    </recommendedName>
</protein>
<organism>
    <name type="scientific">Shewanella pealeana (strain ATCC 700345 / ANG-SQ1)</name>
    <dbReference type="NCBI Taxonomy" id="398579"/>
    <lineage>
        <taxon>Bacteria</taxon>
        <taxon>Pseudomonadati</taxon>
        <taxon>Pseudomonadota</taxon>
        <taxon>Gammaproteobacteria</taxon>
        <taxon>Alteromonadales</taxon>
        <taxon>Shewanellaceae</taxon>
        <taxon>Shewanella</taxon>
    </lineage>
</organism>
<name>Y809_SHEPA</name>
<sequence length="433" mass="44641">MKQHLWPLFLEAIKRDVVPALGCTEPISVALAAAIAIGELGIKNQASNVKMDVSVSANLMKNGMGVGIPGTGMVGLPIAAAIGAVAGDSNAGLEVLKNLTDSDVQAAKLMLDNGQVTVGVADVANVLYAKVTVYYQQQTASVTIADSHTKVIAIEKNGEQCLPAPEVESVNDKSNKANPFTEARLQDIYDFAMHAPLDDIGFIMQSKSLNDALSIEGLSGHYGLKIGATLVKNQEKGLLSGGLLTEVLARTAGASDARMDGAMMPAMSNSGSGNQGIAATMPVVACAEFLKSSETQTIRALMLSHLTAIYIKSYQNKLSALCGATTAAMGSAAGITYLLDGEIEQVSAAICSMIGDVSGVICDGAKTACAMKVSSSAGAAVKSALMAIDGIRVTGTEGIVADDVDQTISNLATLANGAMTQTDVQILEIMMHK</sequence>
<proteinExistence type="inferred from homology"/>
<accession>A8H0P9</accession>
<reference key="1">
    <citation type="submission" date="2007-10" db="EMBL/GenBank/DDBJ databases">
        <title>Complete sequence of Shewanella pealeana ATCC 700345.</title>
        <authorList>
            <consortium name="US DOE Joint Genome Institute"/>
            <person name="Copeland A."/>
            <person name="Lucas S."/>
            <person name="Lapidus A."/>
            <person name="Barry K."/>
            <person name="Glavina del Rio T."/>
            <person name="Dalin E."/>
            <person name="Tice H."/>
            <person name="Pitluck S."/>
            <person name="Chertkov O."/>
            <person name="Brettin T."/>
            <person name="Bruce D."/>
            <person name="Detter J.C."/>
            <person name="Han C."/>
            <person name="Schmutz J."/>
            <person name="Larimer F."/>
            <person name="Land M."/>
            <person name="Hauser L."/>
            <person name="Kyrpides N."/>
            <person name="Kim E."/>
            <person name="Zhao J.-S.Z."/>
            <person name="Manno D."/>
            <person name="Hawari J."/>
            <person name="Richardson P."/>
        </authorList>
    </citation>
    <scope>NUCLEOTIDE SEQUENCE [LARGE SCALE GENOMIC DNA]</scope>
    <source>
        <strain>ATCC 700345 / ANG-SQ1</strain>
    </source>
</reference>
<feature type="chain" id="PRO_0000339849" description="UPF0597 protein Spea_0809">
    <location>
        <begin position="1"/>
        <end position="433"/>
    </location>
</feature>
<comment type="similarity">
    <text evidence="1">Belongs to the UPF0597 family.</text>
</comment>
<gene>
    <name type="ordered locus">Spea_0809</name>
</gene>
<dbReference type="EMBL" id="CP000851">
    <property type="protein sequence ID" value="ABV86136.1"/>
    <property type="molecule type" value="Genomic_DNA"/>
</dbReference>
<dbReference type="RefSeq" id="WP_012154070.1">
    <property type="nucleotide sequence ID" value="NC_009901.1"/>
</dbReference>
<dbReference type="STRING" id="398579.Spea_0809"/>
<dbReference type="KEGG" id="spl:Spea_0809"/>
<dbReference type="eggNOG" id="COG3681">
    <property type="taxonomic scope" value="Bacteria"/>
</dbReference>
<dbReference type="HOGENOM" id="CLU_051840_0_0_6"/>
<dbReference type="OrthoDB" id="41906at2"/>
<dbReference type="Proteomes" id="UP000002608">
    <property type="component" value="Chromosome"/>
</dbReference>
<dbReference type="GO" id="GO:0080146">
    <property type="term" value="F:L-cysteine desulfhydrase activity"/>
    <property type="evidence" value="ECO:0007669"/>
    <property type="project" value="TreeGrafter"/>
</dbReference>
<dbReference type="GO" id="GO:0019450">
    <property type="term" value="P:L-cysteine catabolic process to pyruvate"/>
    <property type="evidence" value="ECO:0007669"/>
    <property type="project" value="TreeGrafter"/>
</dbReference>
<dbReference type="HAMAP" id="MF_01845">
    <property type="entry name" value="UPF0597"/>
    <property type="match status" value="1"/>
</dbReference>
<dbReference type="InterPro" id="IPR005130">
    <property type="entry name" value="Ser_deHydtase-like_asu"/>
</dbReference>
<dbReference type="InterPro" id="IPR021144">
    <property type="entry name" value="UPF0597"/>
</dbReference>
<dbReference type="PANTHER" id="PTHR30501">
    <property type="entry name" value="UPF0597 PROTEIN YHAM"/>
    <property type="match status" value="1"/>
</dbReference>
<dbReference type="PANTHER" id="PTHR30501:SF2">
    <property type="entry name" value="UPF0597 PROTEIN YHAM"/>
    <property type="match status" value="1"/>
</dbReference>
<dbReference type="Pfam" id="PF03313">
    <property type="entry name" value="SDH_alpha"/>
    <property type="match status" value="1"/>
</dbReference>
<dbReference type="PIRSF" id="PIRSF006054">
    <property type="entry name" value="UCP006054"/>
    <property type="match status" value="1"/>
</dbReference>
<keyword id="KW-1185">Reference proteome</keyword>
<evidence type="ECO:0000255" key="1">
    <source>
        <dbReference type="HAMAP-Rule" id="MF_01845"/>
    </source>
</evidence>